<evidence type="ECO:0000255" key="1">
    <source>
        <dbReference type="HAMAP-Rule" id="MF_01368"/>
    </source>
</evidence>
<evidence type="ECO:0000305" key="2"/>
<sequence length="128" mass="14486">MRHRLSGRQLNRNASHRQAMFRNMASSLVRHEIIKTTLPKAKELRRVVEPLITLAKSDSVANRRLAFARTRDRDVVGKLFTELGPRFQGRPGGYTRILKCGFRAGDNAPMAYIELVGRPVDAEAVTEE</sequence>
<reference key="1">
    <citation type="submission" date="2009-05" db="EMBL/GenBank/DDBJ databases">
        <title>Complete sequence of Tolumonas auensis DSM 9187.</title>
        <authorList>
            <consortium name="US DOE Joint Genome Institute"/>
            <person name="Lucas S."/>
            <person name="Copeland A."/>
            <person name="Lapidus A."/>
            <person name="Glavina del Rio T."/>
            <person name="Tice H."/>
            <person name="Bruce D."/>
            <person name="Goodwin L."/>
            <person name="Pitluck S."/>
            <person name="Chertkov O."/>
            <person name="Brettin T."/>
            <person name="Detter J.C."/>
            <person name="Han C."/>
            <person name="Larimer F."/>
            <person name="Land M."/>
            <person name="Hauser L."/>
            <person name="Kyrpides N."/>
            <person name="Mikhailova N."/>
            <person name="Spring S."/>
            <person name="Beller H."/>
        </authorList>
    </citation>
    <scope>NUCLEOTIDE SEQUENCE [LARGE SCALE GENOMIC DNA]</scope>
    <source>
        <strain>DSM 9187 / NBRC 110442 / TA 4</strain>
    </source>
</reference>
<name>RL17_TOLAT</name>
<dbReference type="EMBL" id="CP001616">
    <property type="protein sequence ID" value="ACQ91755.1"/>
    <property type="molecule type" value="Genomic_DNA"/>
</dbReference>
<dbReference type="RefSeq" id="WP_012728354.1">
    <property type="nucleotide sequence ID" value="NC_012691.1"/>
</dbReference>
<dbReference type="SMR" id="C4L7V6"/>
<dbReference type="STRING" id="595494.Tola_0125"/>
<dbReference type="KEGG" id="tau:Tola_0125"/>
<dbReference type="eggNOG" id="COG0203">
    <property type="taxonomic scope" value="Bacteria"/>
</dbReference>
<dbReference type="HOGENOM" id="CLU_074407_2_0_6"/>
<dbReference type="OrthoDB" id="9809073at2"/>
<dbReference type="Proteomes" id="UP000009073">
    <property type="component" value="Chromosome"/>
</dbReference>
<dbReference type="GO" id="GO:0022625">
    <property type="term" value="C:cytosolic large ribosomal subunit"/>
    <property type="evidence" value="ECO:0007669"/>
    <property type="project" value="TreeGrafter"/>
</dbReference>
<dbReference type="GO" id="GO:0003735">
    <property type="term" value="F:structural constituent of ribosome"/>
    <property type="evidence" value="ECO:0007669"/>
    <property type="project" value="InterPro"/>
</dbReference>
<dbReference type="GO" id="GO:0006412">
    <property type="term" value="P:translation"/>
    <property type="evidence" value="ECO:0007669"/>
    <property type="project" value="UniProtKB-UniRule"/>
</dbReference>
<dbReference type="FunFam" id="3.90.1030.10:FF:000001">
    <property type="entry name" value="50S ribosomal protein L17"/>
    <property type="match status" value="1"/>
</dbReference>
<dbReference type="Gene3D" id="3.90.1030.10">
    <property type="entry name" value="Ribosomal protein L17"/>
    <property type="match status" value="1"/>
</dbReference>
<dbReference type="HAMAP" id="MF_01368">
    <property type="entry name" value="Ribosomal_bL17"/>
    <property type="match status" value="1"/>
</dbReference>
<dbReference type="InterPro" id="IPR000456">
    <property type="entry name" value="Ribosomal_bL17"/>
</dbReference>
<dbReference type="InterPro" id="IPR047859">
    <property type="entry name" value="Ribosomal_bL17_CS"/>
</dbReference>
<dbReference type="InterPro" id="IPR036373">
    <property type="entry name" value="Ribosomal_bL17_sf"/>
</dbReference>
<dbReference type="NCBIfam" id="TIGR00059">
    <property type="entry name" value="L17"/>
    <property type="match status" value="1"/>
</dbReference>
<dbReference type="PANTHER" id="PTHR14413:SF16">
    <property type="entry name" value="LARGE RIBOSOMAL SUBUNIT PROTEIN BL17M"/>
    <property type="match status" value="1"/>
</dbReference>
<dbReference type="PANTHER" id="PTHR14413">
    <property type="entry name" value="RIBOSOMAL PROTEIN L17"/>
    <property type="match status" value="1"/>
</dbReference>
<dbReference type="Pfam" id="PF01196">
    <property type="entry name" value="Ribosomal_L17"/>
    <property type="match status" value="1"/>
</dbReference>
<dbReference type="SUPFAM" id="SSF64263">
    <property type="entry name" value="Prokaryotic ribosomal protein L17"/>
    <property type="match status" value="1"/>
</dbReference>
<dbReference type="PROSITE" id="PS01167">
    <property type="entry name" value="RIBOSOMAL_L17"/>
    <property type="match status" value="1"/>
</dbReference>
<keyword id="KW-1185">Reference proteome</keyword>
<keyword id="KW-0687">Ribonucleoprotein</keyword>
<keyword id="KW-0689">Ribosomal protein</keyword>
<accession>C4L7V6</accession>
<comment type="subunit">
    <text evidence="1">Part of the 50S ribosomal subunit. Contacts protein L32.</text>
</comment>
<comment type="similarity">
    <text evidence="1">Belongs to the bacterial ribosomal protein bL17 family.</text>
</comment>
<proteinExistence type="inferred from homology"/>
<gene>
    <name evidence="1" type="primary">rplQ</name>
    <name type="ordered locus">Tola_0125</name>
</gene>
<organism>
    <name type="scientific">Tolumonas auensis (strain DSM 9187 / NBRC 110442 / TA 4)</name>
    <dbReference type="NCBI Taxonomy" id="595494"/>
    <lineage>
        <taxon>Bacteria</taxon>
        <taxon>Pseudomonadati</taxon>
        <taxon>Pseudomonadota</taxon>
        <taxon>Gammaproteobacteria</taxon>
        <taxon>Aeromonadales</taxon>
        <taxon>Aeromonadaceae</taxon>
        <taxon>Tolumonas</taxon>
    </lineage>
</organism>
<protein>
    <recommendedName>
        <fullName evidence="1">Large ribosomal subunit protein bL17</fullName>
    </recommendedName>
    <alternativeName>
        <fullName evidence="2">50S ribosomal protein L17</fullName>
    </alternativeName>
</protein>
<feature type="chain" id="PRO_1000215021" description="Large ribosomal subunit protein bL17">
    <location>
        <begin position="1"/>
        <end position="128"/>
    </location>
</feature>